<organism>
    <name type="scientific">Hyphomonas neptunium (strain ATCC 15444)</name>
    <dbReference type="NCBI Taxonomy" id="228405"/>
    <lineage>
        <taxon>Bacteria</taxon>
        <taxon>Pseudomonadati</taxon>
        <taxon>Pseudomonadota</taxon>
        <taxon>Alphaproteobacteria</taxon>
        <taxon>Hyphomonadales</taxon>
        <taxon>Hyphomonadaceae</taxon>
        <taxon>Hyphomonas</taxon>
    </lineage>
</organism>
<protein>
    <recommendedName>
        <fullName evidence="1">Small ribosomal subunit protein uS15</fullName>
    </recommendedName>
    <alternativeName>
        <fullName evidence="2">30S ribosomal protein S15</fullName>
    </alternativeName>
</protein>
<name>RS15_HYPNA</name>
<keyword id="KW-1185">Reference proteome</keyword>
<keyword id="KW-0687">Ribonucleoprotein</keyword>
<keyword id="KW-0689">Ribosomal protein</keyword>
<keyword id="KW-0694">RNA-binding</keyword>
<keyword id="KW-0699">rRNA-binding</keyword>
<gene>
    <name evidence="1" type="primary">rpsO</name>
    <name type="ordered locus">HNE_3442</name>
</gene>
<sequence>MSITAERKQELIKKFAIKEGDTGSPEVQVAILTERINNLTDHFKTNKKDNHSRRGLLTMVATRRKLLDYARSKSEARYTKLITELGIRR</sequence>
<evidence type="ECO:0000255" key="1">
    <source>
        <dbReference type="HAMAP-Rule" id="MF_01343"/>
    </source>
</evidence>
<evidence type="ECO:0000305" key="2"/>
<dbReference type="EMBL" id="CP000158">
    <property type="protein sequence ID" value="ABI75756.1"/>
    <property type="molecule type" value="Genomic_DNA"/>
</dbReference>
<dbReference type="RefSeq" id="WP_011648410.1">
    <property type="nucleotide sequence ID" value="NC_008358.1"/>
</dbReference>
<dbReference type="SMR" id="Q0BWM8"/>
<dbReference type="STRING" id="228405.HNE_3442"/>
<dbReference type="KEGG" id="hne:HNE_3442"/>
<dbReference type="eggNOG" id="COG0184">
    <property type="taxonomic scope" value="Bacteria"/>
</dbReference>
<dbReference type="HOGENOM" id="CLU_148518_0_0_5"/>
<dbReference type="Proteomes" id="UP000001959">
    <property type="component" value="Chromosome"/>
</dbReference>
<dbReference type="GO" id="GO:0022627">
    <property type="term" value="C:cytosolic small ribosomal subunit"/>
    <property type="evidence" value="ECO:0007669"/>
    <property type="project" value="TreeGrafter"/>
</dbReference>
<dbReference type="GO" id="GO:0019843">
    <property type="term" value="F:rRNA binding"/>
    <property type="evidence" value="ECO:0007669"/>
    <property type="project" value="UniProtKB-UniRule"/>
</dbReference>
<dbReference type="GO" id="GO:0003735">
    <property type="term" value="F:structural constituent of ribosome"/>
    <property type="evidence" value="ECO:0007669"/>
    <property type="project" value="InterPro"/>
</dbReference>
<dbReference type="GO" id="GO:0006412">
    <property type="term" value="P:translation"/>
    <property type="evidence" value="ECO:0007669"/>
    <property type="project" value="UniProtKB-UniRule"/>
</dbReference>
<dbReference type="CDD" id="cd00353">
    <property type="entry name" value="Ribosomal_S15p_S13e"/>
    <property type="match status" value="1"/>
</dbReference>
<dbReference type="FunFam" id="1.10.287.10:FF:000002">
    <property type="entry name" value="30S ribosomal protein S15"/>
    <property type="match status" value="1"/>
</dbReference>
<dbReference type="Gene3D" id="6.10.250.3130">
    <property type="match status" value="1"/>
</dbReference>
<dbReference type="Gene3D" id="1.10.287.10">
    <property type="entry name" value="S15/NS1, RNA-binding"/>
    <property type="match status" value="1"/>
</dbReference>
<dbReference type="HAMAP" id="MF_01343_B">
    <property type="entry name" value="Ribosomal_uS15_B"/>
    <property type="match status" value="1"/>
</dbReference>
<dbReference type="InterPro" id="IPR000589">
    <property type="entry name" value="Ribosomal_uS15"/>
</dbReference>
<dbReference type="InterPro" id="IPR005290">
    <property type="entry name" value="Ribosomal_uS15_bac-type"/>
</dbReference>
<dbReference type="InterPro" id="IPR009068">
    <property type="entry name" value="uS15_NS1_RNA-bd_sf"/>
</dbReference>
<dbReference type="NCBIfam" id="TIGR00952">
    <property type="entry name" value="S15_bact"/>
    <property type="match status" value="1"/>
</dbReference>
<dbReference type="PANTHER" id="PTHR23321">
    <property type="entry name" value="RIBOSOMAL PROTEIN S15, BACTERIAL AND ORGANELLAR"/>
    <property type="match status" value="1"/>
</dbReference>
<dbReference type="PANTHER" id="PTHR23321:SF26">
    <property type="entry name" value="SMALL RIBOSOMAL SUBUNIT PROTEIN US15M"/>
    <property type="match status" value="1"/>
</dbReference>
<dbReference type="Pfam" id="PF00312">
    <property type="entry name" value="Ribosomal_S15"/>
    <property type="match status" value="1"/>
</dbReference>
<dbReference type="SMART" id="SM01387">
    <property type="entry name" value="Ribosomal_S15"/>
    <property type="match status" value="1"/>
</dbReference>
<dbReference type="SUPFAM" id="SSF47060">
    <property type="entry name" value="S15/NS1 RNA-binding domain"/>
    <property type="match status" value="1"/>
</dbReference>
<dbReference type="PROSITE" id="PS00362">
    <property type="entry name" value="RIBOSOMAL_S15"/>
    <property type="match status" value="1"/>
</dbReference>
<accession>Q0BWM8</accession>
<proteinExistence type="inferred from homology"/>
<feature type="chain" id="PRO_1000054795" description="Small ribosomal subunit protein uS15">
    <location>
        <begin position="1"/>
        <end position="89"/>
    </location>
</feature>
<reference key="1">
    <citation type="journal article" date="2006" name="J. Bacteriol.">
        <title>Comparative genomic evidence for a close relationship between the dimorphic prosthecate bacteria Hyphomonas neptunium and Caulobacter crescentus.</title>
        <authorList>
            <person name="Badger J.H."/>
            <person name="Hoover T.R."/>
            <person name="Brun Y.V."/>
            <person name="Weiner R.M."/>
            <person name="Laub M.T."/>
            <person name="Alexandre G."/>
            <person name="Mrazek J."/>
            <person name="Ren Q."/>
            <person name="Paulsen I.T."/>
            <person name="Nelson K.E."/>
            <person name="Khouri H.M."/>
            <person name="Radune D."/>
            <person name="Sosa J."/>
            <person name="Dodson R.J."/>
            <person name="Sullivan S.A."/>
            <person name="Rosovitz M.J."/>
            <person name="Madupu R."/>
            <person name="Brinkac L.M."/>
            <person name="Durkin A.S."/>
            <person name="Daugherty S.C."/>
            <person name="Kothari S.P."/>
            <person name="Giglio M.G."/>
            <person name="Zhou L."/>
            <person name="Haft D.H."/>
            <person name="Selengut J.D."/>
            <person name="Davidsen T.M."/>
            <person name="Yang Q."/>
            <person name="Zafar N."/>
            <person name="Ward N.L."/>
        </authorList>
    </citation>
    <scope>NUCLEOTIDE SEQUENCE [LARGE SCALE GENOMIC DNA]</scope>
    <source>
        <strain>ATCC 15444</strain>
    </source>
</reference>
<comment type="function">
    <text evidence="1">One of the primary rRNA binding proteins, it binds directly to 16S rRNA where it helps nucleate assembly of the platform of the 30S subunit by binding and bridging several RNA helices of the 16S rRNA.</text>
</comment>
<comment type="function">
    <text evidence="1">Forms an intersubunit bridge (bridge B4) with the 23S rRNA of the 50S subunit in the ribosome.</text>
</comment>
<comment type="subunit">
    <text evidence="1">Part of the 30S ribosomal subunit. Forms a bridge to the 50S subunit in the 70S ribosome, contacting the 23S rRNA.</text>
</comment>
<comment type="similarity">
    <text evidence="1">Belongs to the universal ribosomal protein uS15 family.</text>
</comment>